<accession>P9WFP6</accession>
<accession>L0T8B9</accession>
<accession>O53152</accession>
<accession>P67125</accession>
<reference key="1">
    <citation type="journal article" date="2002" name="J. Bacteriol.">
        <title>Whole-genome comparison of Mycobacterium tuberculosis clinical and laboratory strains.</title>
        <authorList>
            <person name="Fleischmann R.D."/>
            <person name="Alland D."/>
            <person name="Eisen J.A."/>
            <person name="Carpenter L."/>
            <person name="White O."/>
            <person name="Peterson J.D."/>
            <person name="DeBoy R.T."/>
            <person name="Dodson R.J."/>
            <person name="Gwinn M.L."/>
            <person name="Haft D.H."/>
            <person name="Hickey E.K."/>
            <person name="Kolonay J.F."/>
            <person name="Nelson W.C."/>
            <person name="Umayam L.A."/>
            <person name="Ermolaeva M.D."/>
            <person name="Salzberg S.L."/>
            <person name="Delcher A."/>
            <person name="Utterback T.R."/>
            <person name="Weidman J.F."/>
            <person name="Khouri H.M."/>
            <person name="Gill J."/>
            <person name="Mikula A."/>
            <person name="Bishai W."/>
            <person name="Jacobs W.R. Jr."/>
            <person name="Venter J.C."/>
            <person name="Fraser C.M."/>
        </authorList>
    </citation>
    <scope>NUCLEOTIDE SEQUENCE [LARGE SCALE GENOMIC DNA]</scope>
    <source>
        <strain>CDC 1551 / Oshkosh</strain>
    </source>
</reference>
<proteinExistence type="inferred from homology"/>
<keyword id="KW-0068">Autocatalytic cleavage</keyword>
<keyword id="KW-0255">Endonuclease</keyword>
<keyword id="KW-0378">Hydrolase</keyword>
<keyword id="KW-0404">Intron homing</keyword>
<keyword id="KW-0540">Nuclease</keyword>
<keyword id="KW-0651">Protein splicing</keyword>
<keyword id="KW-1185">Reference proteome</keyword>
<organism>
    <name type="scientific">Mycobacterium tuberculosis (strain CDC 1551 / Oshkosh)</name>
    <dbReference type="NCBI Taxonomy" id="83331"/>
    <lineage>
        <taxon>Bacteria</taxon>
        <taxon>Bacillati</taxon>
        <taxon>Actinomycetota</taxon>
        <taxon>Actinomycetes</taxon>
        <taxon>Mycobacteriales</taxon>
        <taxon>Mycobacteriaceae</taxon>
        <taxon>Mycobacterium</taxon>
        <taxon>Mycobacterium tuberculosis complex</taxon>
    </lineage>
</organism>
<comment type="PTM">
    <text evidence="4">This protein undergoes a protein self splicing that involves a post-translational excision of the intervening region (intein) followed by peptide ligation.</text>
</comment>
<comment type="similarity">
    <text evidence="4">Belongs to the iron-sulfur cluster assembly SufBD family.</text>
</comment>
<dbReference type="EC" id="3.1.-.-"/>
<dbReference type="EMBL" id="AE000516">
    <property type="protein sequence ID" value="AAK45772.1"/>
    <property type="molecule type" value="Genomic_DNA"/>
</dbReference>
<dbReference type="PIR" id="H70871">
    <property type="entry name" value="H70871"/>
</dbReference>
<dbReference type="SMR" id="P9WFP6"/>
<dbReference type="KEGG" id="mtc:MT1508"/>
<dbReference type="PATRIC" id="fig|83331.31.peg.1622"/>
<dbReference type="HOGENOM" id="CLU_007402_1_0_11"/>
<dbReference type="Proteomes" id="UP000001020">
    <property type="component" value="Chromosome"/>
</dbReference>
<dbReference type="GO" id="GO:0004519">
    <property type="term" value="F:endonuclease activity"/>
    <property type="evidence" value="ECO:0007669"/>
    <property type="project" value="UniProtKB-KW"/>
</dbReference>
<dbReference type="GO" id="GO:0016539">
    <property type="term" value="P:intein-mediated protein splicing"/>
    <property type="evidence" value="ECO:0007669"/>
    <property type="project" value="InterPro"/>
</dbReference>
<dbReference type="GO" id="GO:0006314">
    <property type="term" value="P:intron homing"/>
    <property type="evidence" value="ECO:0007669"/>
    <property type="project" value="UniProtKB-KW"/>
</dbReference>
<dbReference type="GO" id="GO:0016226">
    <property type="term" value="P:iron-sulfur cluster assembly"/>
    <property type="evidence" value="ECO:0007669"/>
    <property type="project" value="InterPro"/>
</dbReference>
<dbReference type="CDD" id="cd00081">
    <property type="entry name" value="Hint"/>
    <property type="match status" value="1"/>
</dbReference>
<dbReference type="FunFam" id="3.10.28.10:FF:000006">
    <property type="entry name" value="FeS assembly protein SufB"/>
    <property type="match status" value="1"/>
</dbReference>
<dbReference type="FunFam" id="2.170.16.10:FF:000006">
    <property type="entry name" value="UPF0051 protein Mb1496"/>
    <property type="match status" value="1"/>
</dbReference>
<dbReference type="Gene3D" id="2.170.16.10">
    <property type="entry name" value="Hedgehog/Intein (Hint) domain"/>
    <property type="match status" value="1"/>
</dbReference>
<dbReference type="Gene3D" id="3.10.28.10">
    <property type="entry name" value="Homing endonucleases"/>
    <property type="match status" value="1"/>
</dbReference>
<dbReference type="InterPro" id="IPR055346">
    <property type="entry name" value="Fe-S_cluster_assembly_SufBD"/>
</dbReference>
<dbReference type="InterPro" id="IPR003586">
    <property type="entry name" value="Hint_dom_C"/>
</dbReference>
<dbReference type="InterPro" id="IPR003587">
    <property type="entry name" value="Hint_dom_N"/>
</dbReference>
<dbReference type="InterPro" id="IPR036844">
    <property type="entry name" value="Hint_dom_sf"/>
</dbReference>
<dbReference type="InterPro" id="IPR027434">
    <property type="entry name" value="Homing_endonucl"/>
</dbReference>
<dbReference type="InterPro" id="IPR006142">
    <property type="entry name" value="INTEIN"/>
</dbReference>
<dbReference type="InterPro" id="IPR030934">
    <property type="entry name" value="Intein_C"/>
</dbReference>
<dbReference type="InterPro" id="IPR004042">
    <property type="entry name" value="Intein_endonuc_central"/>
</dbReference>
<dbReference type="InterPro" id="IPR006141">
    <property type="entry name" value="Intein_N"/>
</dbReference>
<dbReference type="InterPro" id="IPR010231">
    <property type="entry name" value="SUF_FeS_clus_asmbl_SufB"/>
</dbReference>
<dbReference type="InterPro" id="IPR000825">
    <property type="entry name" value="SUF_FeS_clus_asmbl_SufBD_core"/>
</dbReference>
<dbReference type="InterPro" id="IPR037284">
    <property type="entry name" value="SUF_FeS_clus_asmbl_SufBD_sf"/>
</dbReference>
<dbReference type="InterPro" id="IPR045595">
    <property type="entry name" value="SufBD_N"/>
</dbReference>
<dbReference type="NCBIfam" id="TIGR01443">
    <property type="entry name" value="intein_Cterm"/>
    <property type="match status" value="1"/>
</dbReference>
<dbReference type="NCBIfam" id="TIGR01980">
    <property type="entry name" value="sufB"/>
    <property type="match status" value="1"/>
</dbReference>
<dbReference type="PANTHER" id="PTHR30508">
    <property type="entry name" value="FES CLUSTER ASSEMBLY PROTEIN SUF"/>
    <property type="match status" value="1"/>
</dbReference>
<dbReference type="PANTHER" id="PTHR30508:SF1">
    <property type="entry name" value="UPF0051 PROTEIN ABCI8, CHLOROPLASTIC-RELATED"/>
    <property type="match status" value="1"/>
</dbReference>
<dbReference type="Pfam" id="PF01458">
    <property type="entry name" value="SUFBD_core"/>
    <property type="match status" value="1"/>
</dbReference>
<dbReference type="Pfam" id="PF19295">
    <property type="entry name" value="SufBD_N"/>
    <property type="match status" value="1"/>
</dbReference>
<dbReference type="PRINTS" id="PR00379">
    <property type="entry name" value="INTEIN"/>
</dbReference>
<dbReference type="SMART" id="SM00305">
    <property type="entry name" value="HintC"/>
    <property type="match status" value="1"/>
</dbReference>
<dbReference type="SMART" id="SM00306">
    <property type="entry name" value="HintN"/>
    <property type="match status" value="1"/>
</dbReference>
<dbReference type="SUPFAM" id="SSF51294">
    <property type="entry name" value="Hedgehog/intein (Hint) domain"/>
    <property type="match status" value="1"/>
</dbReference>
<dbReference type="SUPFAM" id="SSF101960">
    <property type="entry name" value="Stabilizer of iron transporter SufD"/>
    <property type="match status" value="2"/>
</dbReference>
<dbReference type="PROSITE" id="PS50818">
    <property type="entry name" value="INTEIN_C_TER"/>
    <property type="match status" value="1"/>
</dbReference>
<dbReference type="PROSITE" id="PS50819">
    <property type="entry name" value="INTEIN_ENDONUCLEASE"/>
    <property type="match status" value="1"/>
</dbReference>
<dbReference type="PROSITE" id="PS50817">
    <property type="entry name" value="INTEIN_N_TER"/>
    <property type="match status" value="1"/>
</dbReference>
<feature type="chain" id="PRO_0000428500" description="Iron-sulfur cluster assembly SufBD family protein MT1508, 1st part" evidence="1">
    <location>
        <begin position="1"/>
        <end position="252"/>
    </location>
</feature>
<feature type="chain" id="PRO_0000428501" description="Endonuclease PI-MtuHIIP" evidence="1">
    <location>
        <begin position="253"/>
        <end position="611"/>
    </location>
</feature>
<feature type="chain" id="PRO_0000428502" description="Iron-sulfur cluster assembly SufBD family protein MT1508, 2nd part" evidence="1">
    <location>
        <begin position="612"/>
        <end position="846"/>
    </location>
</feature>
<feature type="domain" description="DOD-type homing endonuclease" evidence="2">
    <location>
        <begin position="388"/>
        <end position="528"/>
    </location>
</feature>
<feature type="region of interest" description="Disordered" evidence="3">
    <location>
        <begin position="1"/>
        <end position="20"/>
    </location>
</feature>
<protein>
    <recommendedName>
        <fullName>Iron-sulfur cluster assembly SufBD family protein MT1508</fullName>
    </recommendedName>
    <component>
        <recommendedName>
            <fullName>Endonuclease PI-MtuHIIP</fullName>
            <ecNumber>3.1.-.-</ecNumber>
        </recommendedName>
        <alternativeName>
            <fullName>Mtu pps1 intein</fullName>
        </alternativeName>
    </component>
</protein>
<gene>
    <name type="ordered locus">MT1508</name>
</gene>
<sequence>MTLTPEASKSVAQPPTQAPLTQEEAIASLGRYGYGWADSDVAGANAQRGLSEAVVRDISAKKNEPDWMLQSRLKALRIFDRKPIPKWGSNLDGIDFDNIKYFVRSTEKQAASWDDLPEDIRNTYDRLGIPEAEKQRLVAGVAAQYESEVVYHQIREDLEAQGVIFLDTDTGLREHPDIFKEYFGTVIPAGDNKFSALNTAVWSGGSFIYVPPGVHVDIPLQAYFRINTENMGQFERTLIIADEGSYVHYVEGCLPAGELITTADGDLRPIESIRVGDFVTGHDGRPHRVTAVQVRDLDGELFTFTPMSPANAFSVTAEHPLLAIPRDEVRVMRKERNGWKAEVNSTKLRSAEPRWIAAKDVAEGDFLIYPKPKPIPHRTVLPLEFARLAGYYLAEGHACLTNGCESLIFSFHSDEFEYVEDVRQACKSLYEKSGSVLIEEHKHSARVTVYTKAGYAAMRDNVGIGSSNKKLSDLLMRQDETFLRELVDAYVNGDGNVTRRNGAVWKRVHTTSRLWAFQLQSILARLGHYATVELRRPGGPGVIMGRNVVRKDIYQVQWTEGGRGPKQARDCGDYFAVPIKKRAVREAHEPVYNLDVENPDSYLAYGFAVHNCTAPIYKSDSLHSAVVEIIVKPHARVRYTTIQNWSNNVYNLVTKRARAEAGATMEWIDGNIGSKVTMKYPAVWMTGEHAKGEVLSVAFAGEDQHQDTGAKMLHLAPNTSSNIVSKSVARGGGRTSYRGLVQVNKGAHGSRSSVKCDALLVDTVSRSDTYPYVDIREDDVTMGHEATVSKVSENQLFYLMSRGLTEDEAMAMVVRGFVEPIAKELPMEYALELNRLIELQMEGAVG</sequence>
<evidence type="ECO:0000255" key="1"/>
<evidence type="ECO:0000255" key="2">
    <source>
        <dbReference type="PROSITE-ProRule" id="PRU00273"/>
    </source>
</evidence>
<evidence type="ECO:0000256" key="3">
    <source>
        <dbReference type="SAM" id="MobiDB-lite"/>
    </source>
</evidence>
<evidence type="ECO:0000305" key="4"/>
<name>Y1461_MYCTO</name>